<proteinExistence type="inferred from homology"/>
<keyword id="KW-0963">Cytoplasm</keyword>
<keyword id="KW-0275">Fatty acid biosynthesis</keyword>
<keyword id="KW-0276">Fatty acid metabolism</keyword>
<keyword id="KW-0444">Lipid biosynthesis</keyword>
<keyword id="KW-0443">Lipid metabolism</keyword>
<keyword id="KW-0596">Phosphopantetheine</keyword>
<keyword id="KW-0597">Phosphoprotein</keyword>
<evidence type="ECO:0000255" key="1">
    <source>
        <dbReference type="HAMAP-Rule" id="MF_01217"/>
    </source>
</evidence>
<evidence type="ECO:0000255" key="2">
    <source>
        <dbReference type="PROSITE-ProRule" id="PRU00258"/>
    </source>
</evidence>
<reference key="1">
    <citation type="submission" date="2006-09" db="EMBL/GenBank/DDBJ databases">
        <title>Complete sequence of Rhodopseudomonas palustris BisA53.</title>
        <authorList>
            <consortium name="US DOE Joint Genome Institute"/>
            <person name="Copeland A."/>
            <person name="Lucas S."/>
            <person name="Lapidus A."/>
            <person name="Barry K."/>
            <person name="Detter J.C."/>
            <person name="Glavina del Rio T."/>
            <person name="Hammon N."/>
            <person name="Israni S."/>
            <person name="Dalin E."/>
            <person name="Tice H."/>
            <person name="Pitluck S."/>
            <person name="Chain P."/>
            <person name="Malfatti S."/>
            <person name="Shin M."/>
            <person name="Vergez L."/>
            <person name="Schmutz J."/>
            <person name="Larimer F."/>
            <person name="Land M."/>
            <person name="Hauser L."/>
            <person name="Pelletier D.A."/>
            <person name="Kyrpides N."/>
            <person name="Kim E."/>
            <person name="Harwood C.S."/>
            <person name="Oda Y."/>
            <person name="Richardson P."/>
        </authorList>
    </citation>
    <scope>NUCLEOTIDE SEQUENCE [LARGE SCALE GENOMIC DNA]</scope>
    <source>
        <strain>BisA53</strain>
    </source>
</reference>
<sequence length="79" mass="8555">MSEIGERVKKIVVEHLGVEPEKVVDAASFIDDLGADSLDTVELVMAFEEEFGCEIPDDAAETILTVGDAVKFLEKNAKS</sequence>
<organism>
    <name type="scientific">Rhodopseudomonas palustris (strain BisA53)</name>
    <dbReference type="NCBI Taxonomy" id="316055"/>
    <lineage>
        <taxon>Bacteria</taxon>
        <taxon>Pseudomonadati</taxon>
        <taxon>Pseudomonadota</taxon>
        <taxon>Alphaproteobacteria</taxon>
        <taxon>Hyphomicrobiales</taxon>
        <taxon>Nitrobacteraceae</taxon>
        <taxon>Rhodopseudomonas</taxon>
    </lineage>
</organism>
<protein>
    <recommendedName>
        <fullName evidence="1">Acyl carrier protein</fullName>
        <shortName evidence="1">ACP</shortName>
    </recommendedName>
</protein>
<gene>
    <name evidence="1" type="primary">acpP</name>
    <name type="ordered locus">RPE_3305</name>
</gene>
<name>ACP_RHOP5</name>
<accession>Q07LE6</accession>
<feature type="chain" id="PRO_1000066673" description="Acyl carrier protein">
    <location>
        <begin position="1"/>
        <end position="79"/>
    </location>
</feature>
<feature type="domain" description="Carrier" evidence="2">
    <location>
        <begin position="2"/>
        <end position="77"/>
    </location>
</feature>
<feature type="modified residue" description="O-(pantetheine 4'-phosphoryl)serine" evidence="2">
    <location>
        <position position="37"/>
    </location>
</feature>
<dbReference type="EMBL" id="CP000463">
    <property type="protein sequence ID" value="ABJ07238.1"/>
    <property type="molecule type" value="Genomic_DNA"/>
</dbReference>
<dbReference type="SMR" id="Q07LE6"/>
<dbReference type="STRING" id="316055.RPE_3305"/>
<dbReference type="KEGG" id="rpe:RPE_3305"/>
<dbReference type="eggNOG" id="COG0236">
    <property type="taxonomic scope" value="Bacteria"/>
</dbReference>
<dbReference type="HOGENOM" id="CLU_108696_5_1_5"/>
<dbReference type="OrthoDB" id="9804551at2"/>
<dbReference type="UniPathway" id="UPA00094"/>
<dbReference type="GO" id="GO:0005829">
    <property type="term" value="C:cytosol"/>
    <property type="evidence" value="ECO:0007669"/>
    <property type="project" value="TreeGrafter"/>
</dbReference>
<dbReference type="GO" id="GO:0016020">
    <property type="term" value="C:membrane"/>
    <property type="evidence" value="ECO:0007669"/>
    <property type="project" value="GOC"/>
</dbReference>
<dbReference type="GO" id="GO:0000035">
    <property type="term" value="F:acyl binding"/>
    <property type="evidence" value="ECO:0007669"/>
    <property type="project" value="TreeGrafter"/>
</dbReference>
<dbReference type="GO" id="GO:0000036">
    <property type="term" value="F:acyl carrier activity"/>
    <property type="evidence" value="ECO:0007669"/>
    <property type="project" value="UniProtKB-UniRule"/>
</dbReference>
<dbReference type="GO" id="GO:0031177">
    <property type="term" value="F:phosphopantetheine binding"/>
    <property type="evidence" value="ECO:0007669"/>
    <property type="project" value="InterPro"/>
</dbReference>
<dbReference type="GO" id="GO:0009245">
    <property type="term" value="P:lipid A biosynthetic process"/>
    <property type="evidence" value="ECO:0007669"/>
    <property type="project" value="TreeGrafter"/>
</dbReference>
<dbReference type="FunFam" id="1.10.1200.10:FF:000012">
    <property type="entry name" value="Acyl carrier protein"/>
    <property type="match status" value="1"/>
</dbReference>
<dbReference type="Gene3D" id="1.10.1200.10">
    <property type="entry name" value="ACP-like"/>
    <property type="match status" value="1"/>
</dbReference>
<dbReference type="HAMAP" id="MF_01217">
    <property type="entry name" value="Acyl_carrier"/>
    <property type="match status" value="1"/>
</dbReference>
<dbReference type="InterPro" id="IPR003231">
    <property type="entry name" value="ACP"/>
</dbReference>
<dbReference type="InterPro" id="IPR036736">
    <property type="entry name" value="ACP-like_sf"/>
</dbReference>
<dbReference type="InterPro" id="IPR020806">
    <property type="entry name" value="PKS_PP-bd"/>
</dbReference>
<dbReference type="InterPro" id="IPR009081">
    <property type="entry name" value="PP-bd_ACP"/>
</dbReference>
<dbReference type="InterPro" id="IPR006162">
    <property type="entry name" value="Ppantetheine_attach_site"/>
</dbReference>
<dbReference type="NCBIfam" id="TIGR00517">
    <property type="entry name" value="acyl_carrier"/>
    <property type="match status" value="1"/>
</dbReference>
<dbReference type="NCBIfam" id="NF002148">
    <property type="entry name" value="PRK00982.1-2"/>
    <property type="match status" value="1"/>
</dbReference>
<dbReference type="NCBIfam" id="NF002149">
    <property type="entry name" value="PRK00982.1-3"/>
    <property type="match status" value="1"/>
</dbReference>
<dbReference type="NCBIfam" id="NF002150">
    <property type="entry name" value="PRK00982.1-4"/>
    <property type="match status" value="1"/>
</dbReference>
<dbReference type="NCBIfam" id="NF002151">
    <property type="entry name" value="PRK00982.1-5"/>
    <property type="match status" value="1"/>
</dbReference>
<dbReference type="PANTHER" id="PTHR20863">
    <property type="entry name" value="ACYL CARRIER PROTEIN"/>
    <property type="match status" value="1"/>
</dbReference>
<dbReference type="PANTHER" id="PTHR20863:SF76">
    <property type="entry name" value="CARRIER DOMAIN-CONTAINING PROTEIN"/>
    <property type="match status" value="1"/>
</dbReference>
<dbReference type="Pfam" id="PF00550">
    <property type="entry name" value="PP-binding"/>
    <property type="match status" value="1"/>
</dbReference>
<dbReference type="SMART" id="SM00823">
    <property type="entry name" value="PKS_PP"/>
    <property type="match status" value="1"/>
</dbReference>
<dbReference type="SUPFAM" id="SSF47336">
    <property type="entry name" value="ACP-like"/>
    <property type="match status" value="1"/>
</dbReference>
<dbReference type="PROSITE" id="PS50075">
    <property type="entry name" value="CARRIER"/>
    <property type="match status" value="1"/>
</dbReference>
<dbReference type="PROSITE" id="PS00012">
    <property type="entry name" value="PHOSPHOPANTETHEINE"/>
    <property type="match status" value="1"/>
</dbReference>
<comment type="function">
    <text evidence="1">Carrier of the growing fatty acid chain in fatty acid biosynthesis.</text>
</comment>
<comment type="pathway">
    <text evidence="1">Lipid metabolism; fatty acid biosynthesis.</text>
</comment>
<comment type="subcellular location">
    <subcellularLocation>
        <location evidence="1">Cytoplasm</location>
    </subcellularLocation>
</comment>
<comment type="PTM">
    <text evidence="1">4'-phosphopantetheine is transferred from CoA to a specific serine of apo-ACP by AcpS. This modification is essential for activity because fatty acids are bound in thioester linkage to the sulfhydryl of the prosthetic group.</text>
</comment>
<comment type="similarity">
    <text evidence="1">Belongs to the acyl carrier protein (ACP) family.</text>
</comment>